<gene>
    <name evidence="1" type="primary">lon</name>
    <name type="ordered locus">BDU_255</name>
</gene>
<feature type="chain" id="PRO_0000396539" description="Lon protease">
    <location>
        <begin position="1"/>
        <end position="816"/>
    </location>
</feature>
<feature type="domain" description="Lon N-terminal" evidence="3">
    <location>
        <begin position="40"/>
        <end position="244"/>
    </location>
</feature>
<feature type="domain" description="Lon proteolytic" evidence="2">
    <location>
        <begin position="636"/>
        <end position="816"/>
    </location>
</feature>
<feature type="active site" evidence="1">
    <location>
        <position position="724"/>
    </location>
</feature>
<feature type="active site" evidence="1">
    <location>
        <position position="767"/>
    </location>
</feature>
<feature type="binding site" evidence="1">
    <location>
        <begin position="398"/>
        <end position="405"/>
    </location>
    <ligand>
        <name>ATP</name>
        <dbReference type="ChEBI" id="CHEBI:30616"/>
    </ligand>
</feature>
<organism>
    <name type="scientific">Borrelia duttonii (strain Ly)</name>
    <dbReference type="NCBI Taxonomy" id="412419"/>
    <lineage>
        <taxon>Bacteria</taxon>
        <taxon>Pseudomonadati</taxon>
        <taxon>Spirochaetota</taxon>
        <taxon>Spirochaetia</taxon>
        <taxon>Spirochaetales</taxon>
        <taxon>Borreliaceae</taxon>
        <taxon>Borrelia</taxon>
    </lineage>
</organism>
<keyword id="KW-0067">ATP-binding</keyword>
<keyword id="KW-0963">Cytoplasm</keyword>
<keyword id="KW-0378">Hydrolase</keyword>
<keyword id="KW-0547">Nucleotide-binding</keyword>
<keyword id="KW-0645">Protease</keyword>
<keyword id="KW-0720">Serine protease</keyword>
<keyword id="KW-0346">Stress response</keyword>
<evidence type="ECO:0000255" key="1">
    <source>
        <dbReference type="HAMAP-Rule" id="MF_01973"/>
    </source>
</evidence>
<evidence type="ECO:0000255" key="2">
    <source>
        <dbReference type="PROSITE-ProRule" id="PRU01122"/>
    </source>
</evidence>
<evidence type="ECO:0000255" key="3">
    <source>
        <dbReference type="PROSITE-ProRule" id="PRU01123"/>
    </source>
</evidence>
<sequence>MKSREIEYFMEEIKDTVSKEKKRSKNSGGILPHFDKPVRVPLIAVPSHPVFPSMFIPIVIVSDIDMKAVDYVIKGNGIISLFVLRDKFLEKSGNNKDGKLTINYQKDIYSVGVTAKIVKKINLPDGGYNIFVSTIDRVKFVKVVLNEDFPIIEVDYLKQIPIKKYDVNLKAIYSSILLKTKEIFSHRKMPEFQLNMVNIEDKGRLCDVVAGMIASSKESHQEVLETLSVKDRLKKVLELLYEELNLIEIQNKIAKGIQEKLEKQQKEFFLKEQLKAIKTELGVGDEKNSEFLKMKSKIDALALKGEALDAVGRELEKFSFLERHSSEYIVVRNYLELITNLPWEDTKVDFDKFNLQRAEKILDKTHYGMREVKDRILEYISVLKLRKSQKGAIMLLVGPPGVGKTSIGAAIAEVLNTKFFRFSVGGIRDESEIKGHRRTYVGALPGKIIQGLRITKTNSPVFLIDEIDKVSSSHYGDPFSVLLEVLDPEQNVNFRDHYLDLPFDISNVFFILTANSLETIPTPLLNRMEVIQLSGYVDDEKIEIARKYLIPKVLKENGVDKDSLKFQSSSLVQIAREYARDNGLRNFEKYLKQIVRKIARKLVEDQSVKAYQISKENLEEYIGIPVFRKEKFLDKAMSPGMVMGLAWTNYGGSTLIIETVKTESKSPGIKLTGRLGDVMKESANIAFTYVNSISNELKVHKSFFEKYMIHLHIPEGATPKDGPSAGITIASAFISLALNKTVRPNLAMTGELSLTGNVMAIGGLKAKIIAAKRNGVEHIIIPKANKVDLDDIPINIKNGINFHLVDSMKEVIKLLF</sequence>
<proteinExistence type="inferred from homology"/>
<comment type="function">
    <text evidence="1">ATP-dependent serine protease that mediates the selective degradation of mutant and abnormal proteins as well as certain short-lived regulatory proteins. Required for cellular homeostasis and for survival from DNA damage and developmental changes induced by stress. Degrades polypeptides processively to yield small peptide fragments that are 5 to 10 amino acids long. Binds to DNA in a double-stranded, site-specific manner.</text>
</comment>
<comment type="catalytic activity">
    <reaction evidence="1">
        <text>Hydrolysis of proteins in presence of ATP.</text>
        <dbReference type="EC" id="3.4.21.53"/>
    </reaction>
</comment>
<comment type="subunit">
    <text evidence="1">Homohexamer. Organized in a ring with a central cavity.</text>
</comment>
<comment type="subcellular location">
    <subcellularLocation>
        <location evidence="1">Cytoplasm</location>
    </subcellularLocation>
</comment>
<comment type="induction">
    <text evidence="1">By heat shock.</text>
</comment>
<comment type="similarity">
    <text evidence="1">Belongs to the peptidase S16 family.</text>
</comment>
<dbReference type="EC" id="3.4.21.53" evidence="1"/>
<dbReference type="EMBL" id="CP000976">
    <property type="protein sequence ID" value="ACH93207.1"/>
    <property type="molecule type" value="Genomic_DNA"/>
</dbReference>
<dbReference type="RefSeq" id="WP_012538019.1">
    <property type="nucleotide sequence ID" value="NC_011229.1"/>
</dbReference>
<dbReference type="SMR" id="B5RL78"/>
<dbReference type="STRING" id="412419.BDU_255"/>
<dbReference type="KEGG" id="bdu:BDU_255"/>
<dbReference type="eggNOG" id="COG0466">
    <property type="taxonomic scope" value="Bacteria"/>
</dbReference>
<dbReference type="HOGENOM" id="CLU_004109_4_3_12"/>
<dbReference type="Proteomes" id="UP000000611">
    <property type="component" value="Chromosome"/>
</dbReference>
<dbReference type="GO" id="GO:0005737">
    <property type="term" value="C:cytoplasm"/>
    <property type="evidence" value="ECO:0007669"/>
    <property type="project" value="UniProtKB-SubCell"/>
</dbReference>
<dbReference type="GO" id="GO:0005524">
    <property type="term" value="F:ATP binding"/>
    <property type="evidence" value="ECO:0007669"/>
    <property type="project" value="UniProtKB-UniRule"/>
</dbReference>
<dbReference type="GO" id="GO:0016887">
    <property type="term" value="F:ATP hydrolysis activity"/>
    <property type="evidence" value="ECO:0007669"/>
    <property type="project" value="UniProtKB-UniRule"/>
</dbReference>
<dbReference type="GO" id="GO:0004176">
    <property type="term" value="F:ATP-dependent peptidase activity"/>
    <property type="evidence" value="ECO:0007669"/>
    <property type="project" value="UniProtKB-UniRule"/>
</dbReference>
<dbReference type="GO" id="GO:0043565">
    <property type="term" value="F:sequence-specific DNA binding"/>
    <property type="evidence" value="ECO:0007669"/>
    <property type="project" value="UniProtKB-UniRule"/>
</dbReference>
<dbReference type="GO" id="GO:0004252">
    <property type="term" value="F:serine-type endopeptidase activity"/>
    <property type="evidence" value="ECO:0007669"/>
    <property type="project" value="UniProtKB-UniRule"/>
</dbReference>
<dbReference type="GO" id="GO:0034605">
    <property type="term" value="P:cellular response to heat"/>
    <property type="evidence" value="ECO:0007669"/>
    <property type="project" value="UniProtKB-UniRule"/>
</dbReference>
<dbReference type="GO" id="GO:0006515">
    <property type="term" value="P:protein quality control for misfolded or incompletely synthesized proteins"/>
    <property type="evidence" value="ECO:0007669"/>
    <property type="project" value="UniProtKB-UniRule"/>
</dbReference>
<dbReference type="CDD" id="cd19500">
    <property type="entry name" value="RecA-like_Lon"/>
    <property type="match status" value="1"/>
</dbReference>
<dbReference type="FunFam" id="3.40.50.300:FF:000021">
    <property type="entry name" value="Lon protease homolog"/>
    <property type="match status" value="1"/>
</dbReference>
<dbReference type="Gene3D" id="1.10.8.60">
    <property type="match status" value="1"/>
</dbReference>
<dbReference type="Gene3D" id="1.20.5.5270">
    <property type="match status" value="1"/>
</dbReference>
<dbReference type="Gene3D" id="1.20.58.1480">
    <property type="match status" value="1"/>
</dbReference>
<dbReference type="Gene3D" id="3.30.230.10">
    <property type="match status" value="1"/>
</dbReference>
<dbReference type="Gene3D" id="2.30.130.40">
    <property type="entry name" value="LON domain-like"/>
    <property type="match status" value="1"/>
</dbReference>
<dbReference type="Gene3D" id="3.40.50.300">
    <property type="entry name" value="P-loop containing nucleotide triphosphate hydrolases"/>
    <property type="match status" value="1"/>
</dbReference>
<dbReference type="HAMAP" id="MF_01973">
    <property type="entry name" value="lon_bact"/>
    <property type="match status" value="1"/>
</dbReference>
<dbReference type="InterPro" id="IPR003593">
    <property type="entry name" value="AAA+_ATPase"/>
</dbReference>
<dbReference type="InterPro" id="IPR003959">
    <property type="entry name" value="ATPase_AAA_core"/>
</dbReference>
<dbReference type="InterPro" id="IPR027543">
    <property type="entry name" value="Lon_bac"/>
</dbReference>
<dbReference type="InterPro" id="IPR004815">
    <property type="entry name" value="Lon_bac/euk-typ"/>
</dbReference>
<dbReference type="InterPro" id="IPR054594">
    <property type="entry name" value="Lon_lid"/>
</dbReference>
<dbReference type="InterPro" id="IPR008269">
    <property type="entry name" value="Lon_proteolytic"/>
</dbReference>
<dbReference type="InterPro" id="IPR027065">
    <property type="entry name" value="Lon_Prtase"/>
</dbReference>
<dbReference type="InterPro" id="IPR003111">
    <property type="entry name" value="Lon_prtase_N"/>
</dbReference>
<dbReference type="InterPro" id="IPR046336">
    <property type="entry name" value="Lon_prtase_N_sf"/>
</dbReference>
<dbReference type="InterPro" id="IPR027417">
    <property type="entry name" value="P-loop_NTPase"/>
</dbReference>
<dbReference type="InterPro" id="IPR008268">
    <property type="entry name" value="Peptidase_S16_AS"/>
</dbReference>
<dbReference type="InterPro" id="IPR015947">
    <property type="entry name" value="PUA-like_sf"/>
</dbReference>
<dbReference type="InterPro" id="IPR020568">
    <property type="entry name" value="Ribosomal_Su5_D2-typ_SF"/>
</dbReference>
<dbReference type="InterPro" id="IPR014721">
    <property type="entry name" value="Ribsml_uS5_D2-typ_fold_subgr"/>
</dbReference>
<dbReference type="NCBIfam" id="TIGR00763">
    <property type="entry name" value="lon"/>
    <property type="match status" value="1"/>
</dbReference>
<dbReference type="PANTHER" id="PTHR43718">
    <property type="entry name" value="LON PROTEASE"/>
    <property type="match status" value="1"/>
</dbReference>
<dbReference type="PANTHER" id="PTHR43718:SF2">
    <property type="entry name" value="LON PROTEASE HOMOLOG, MITOCHONDRIAL"/>
    <property type="match status" value="1"/>
</dbReference>
<dbReference type="Pfam" id="PF00004">
    <property type="entry name" value="AAA"/>
    <property type="match status" value="1"/>
</dbReference>
<dbReference type="Pfam" id="PF05362">
    <property type="entry name" value="Lon_C"/>
    <property type="match status" value="1"/>
</dbReference>
<dbReference type="Pfam" id="PF22667">
    <property type="entry name" value="Lon_lid"/>
    <property type="match status" value="1"/>
</dbReference>
<dbReference type="Pfam" id="PF02190">
    <property type="entry name" value="LON_substr_bdg"/>
    <property type="match status" value="1"/>
</dbReference>
<dbReference type="PIRSF" id="PIRSF001174">
    <property type="entry name" value="Lon_proteas"/>
    <property type="match status" value="1"/>
</dbReference>
<dbReference type="PRINTS" id="PR00830">
    <property type="entry name" value="ENDOLAPTASE"/>
</dbReference>
<dbReference type="SMART" id="SM00382">
    <property type="entry name" value="AAA"/>
    <property type="match status" value="1"/>
</dbReference>
<dbReference type="SMART" id="SM00464">
    <property type="entry name" value="LON"/>
    <property type="match status" value="1"/>
</dbReference>
<dbReference type="SUPFAM" id="SSF52540">
    <property type="entry name" value="P-loop containing nucleoside triphosphate hydrolases"/>
    <property type="match status" value="1"/>
</dbReference>
<dbReference type="SUPFAM" id="SSF88697">
    <property type="entry name" value="PUA domain-like"/>
    <property type="match status" value="1"/>
</dbReference>
<dbReference type="SUPFAM" id="SSF54211">
    <property type="entry name" value="Ribosomal protein S5 domain 2-like"/>
    <property type="match status" value="1"/>
</dbReference>
<dbReference type="PROSITE" id="PS51787">
    <property type="entry name" value="LON_N"/>
    <property type="match status" value="1"/>
</dbReference>
<dbReference type="PROSITE" id="PS51786">
    <property type="entry name" value="LON_PROTEOLYTIC"/>
    <property type="match status" value="1"/>
</dbReference>
<dbReference type="PROSITE" id="PS01046">
    <property type="entry name" value="LON_SER"/>
    <property type="match status" value="1"/>
</dbReference>
<reference key="1">
    <citation type="journal article" date="2008" name="PLoS Genet.">
        <title>The genome of Borrelia recurrentis, the agent of deadly louse-borne relapsing fever, is a degraded subset of tick-borne Borrelia duttonii.</title>
        <authorList>
            <person name="Lescot M."/>
            <person name="Audic S."/>
            <person name="Robert C."/>
            <person name="Nguyen T.T."/>
            <person name="Blanc G."/>
            <person name="Cutler S.J."/>
            <person name="Wincker P."/>
            <person name="Couloux A."/>
            <person name="Claverie J.-M."/>
            <person name="Raoult D."/>
            <person name="Drancourt M."/>
        </authorList>
    </citation>
    <scope>NUCLEOTIDE SEQUENCE [LARGE SCALE GENOMIC DNA]</scope>
    <source>
        <strain>Ly</strain>
    </source>
</reference>
<accession>B5RL78</accession>
<name>LON_BORDL</name>
<protein>
    <recommendedName>
        <fullName evidence="1">Lon protease</fullName>
        <ecNumber evidence="1">3.4.21.53</ecNumber>
    </recommendedName>
    <alternativeName>
        <fullName evidence="1">ATP-dependent protease La</fullName>
    </alternativeName>
</protein>